<dbReference type="EC" id="2.2.1.7" evidence="1"/>
<dbReference type="EMBL" id="CP000951">
    <property type="protein sequence ID" value="ACA99171.1"/>
    <property type="molecule type" value="Genomic_DNA"/>
</dbReference>
<dbReference type="RefSeq" id="WP_012306794.1">
    <property type="nucleotide sequence ID" value="NZ_JAHHPU010000001.1"/>
</dbReference>
<dbReference type="SMR" id="B1XKC5"/>
<dbReference type="STRING" id="32049.SYNPCC7002_A1172"/>
<dbReference type="KEGG" id="syp:SYNPCC7002_A1172"/>
<dbReference type="eggNOG" id="COG1154">
    <property type="taxonomic scope" value="Bacteria"/>
</dbReference>
<dbReference type="HOGENOM" id="CLU_009227_1_4_3"/>
<dbReference type="UniPathway" id="UPA00064">
    <property type="reaction ID" value="UER00091"/>
</dbReference>
<dbReference type="Proteomes" id="UP000001688">
    <property type="component" value="Chromosome"/>
</dbReference>
<dbReference type="GO" id="GO:0005829">
    <property type="term" value="C:cytosol"/>
    <property type="evidence" value="ECO:0007669"/>
    <property type="project" value="TreeGrafter"/>
</dbReference>
<dbReference type="GO" id="GO:0008661">
    <property type="term" value="F:1-deoxy-D-xylulose-5-phosphate synthase activity"/>
    <property type="evidence" value="ECO:0007669"/>
    <property type="project" value="UniProtKB-UniRule"/>
</dbReference>
<dbReference type="GO" id="GO:0000287">
    <property type="term" value="F:magnesium ion binding"/>
    <property type="evidence" value="ECO:0007669"/>
    <property type="project" value="UniProtKB-UniRule"/>
</dbReference>
<dbReference type="GO" id="GO:0030976">
    <property type="term" value="F:thiamine pyrophosphate binding"/>
    <property type="evidence" value="ECO:0007669"/>
    <property type="project" value="UniProtKB-UniRule"/>
</dbReference>
<dbReference type="GO" id="GO:0052865">
    <property type="term" value="P:1-deoxy-D-xylulose 5-phosphate biosynthetic process"/>
    <property type="evidence" value="ECO:0007669"/>
    <property type="project" value="UniProtKB-UniPathway"/>
</dbReference>
<dbReference type="GO" id="GO:0019288">
    <property type="term" value="P:isopentenyl diphosphate biosynthetic process, methylerythritol 4-phosphate pathway"/>
    <property type="evidence" value="ECO:0007669"/>
    <property type="project" value="TreeGrafter"/>
</dbReference>
<dbReference type="GO" id="GO:0016114">
    <property type="term" value="P:terpenoid biosynthetic process"/>
    <property type="evidence" value="ECO:0007669"/>
    <property type="project" value="UniProtKB-UniRule"/>
</dbReference>
<dbReference type="GO" id="GO:0009228">
    <property type="term" value="P:thiamine biosynthetic process"/>
    <property type="evidence" value="ECO:0007669"/>
    <property type="project" value="UniProtKB-UniRule"/>
</dbReference>
<dbReference type="CDD" id="cd02007">
    <property type="entry name" value="TPP_DXS"/>
    <property type="match status" value="1"/>
</dbReference>
<dbReference type="CDD" id="cd07033">
    <property type="entry name" value="TPP_PYR_DXS_TK_like"/>
    <property type="match status" value="1"/>
</dbReference>
<dbReference type="FunFam" id="3.40.50.920:FF:000002">
    <property type="entry name" value="1-deoxy-D-xylulose-5-phosphate synthase"/>
    <property type="match status" value="1"/>
</dbReference>
<dbReference type="FunFam" id="3.40.50.970:FF:000005">
    <property type="entry name" value="1-deoxy-D-xylulose-5-phosphate synthase"/>
    <property type="match status" value="1"/>
</dbReference>
<dbReference type="Gene3D" id="3.40.50.920">
    <property type="match status" value="1"/>
</dbReference>
<dbReference type="Gene3D" id="3.40.50.970">
    <property type="match status" value="2"/>
</dbReference>
<dbReference type="HAMAP" id="MF_00315">
    <property type="entry name" value="DXP_synth"/>
    <property type="match status" value="1"/>
</dbReference>
<dbReference type="InterPro" id="IPR005477">
    <property type="entry name" value="Dxylulose-5-P_synthase"/>
</dbReference>
<dbReference type="InterPro" id="IPR029061">
    <property type="entry name" value="THDP-binding"/>
</dbReference>
<dbReference type="InterPro" id="IPR009014">
    <property type="entry name" value="Transketo_C/PFOR_II"/>
</dbReference>
<dbReference type="InterPro" id="IPR005475">
    <property type="entry name" value="Transketolase-like_Pyr-bd"/>
</dbReference>
<dbReference type="InterPro" id="IPR020826">
    <property type="entry name" value="Transketolase_BS"/>
</dbReference>
<dbReference type="InterPro" id="IPR033248">
    <property type="entry name" value="Transketolase_C"/>
</dbReference>
<dbReference type="InterPro" id="IPR049557">
    <property type="entry name" value="Transketolase_CS"/>
</dbReference>
<dbReference type="NCBIfam" id="TIGR00204">
    <property type="entry name" value="dxs"/>
    <property type="match status" value="1"/>
</dbReference>
<dbReference type="NCBIfam" id="NF003933">
    <property type="entry name" value="PRK05444.2-2"/>
    <property type="match status" value="1"/>
</dbReference>
<dbReference type="PANTHER" id="PTHR43322">
    <property type="entry name" value="1-D-DEOXYXYLULOSE 5-PHOSPHATE SYNTHASE-RELATED"/>
    <property type="match status" value="1"/>
</dbReference>
<dbReference type="PANTHER" id="PTHR43322:SF5">
    <property type="entry name" value="1-DEOXY-D-XYLULOSE-5-PHOSPHATE SYNTHASE, CHLOROPLASTIC"/>
    <property type="match status" value="1"/>
</dbReference>
<dbReference type="Pfam" id="PF13292">
    <property type="entry name" value="DXP_synthase_N"/>
    <property type="match status" value="1"/>
</dbReference>
<dbReference type="Pfam" id="PF02779">
    <property type="entry name" value="Transket_pyr"/>
    <property type="match status" value="1"/>
</dbReference>
<dbReference type="Pfam" id="PF02780">
    <property type="entry name" value="Transketolase_C"/>
    <property type="match status" value="1"/>
</dbReference>
<dbReference type="SMART" id="SM00861">
    <property type="entry name" value="Transket_pyr"/>
    <property type="match status" value="1"/>
</dbReference>
<dbReference type="SUPFAM" id="SSF52518">
    <property type="entry name" value="Thiamin diphosphate-binding fold (THDP-binding)"/>
    <property type="match status" value="2"/>
</dbReference>
<dbReference type="SUPFAM" id="SSF52922">
    <property type="entry name" value="TK C-terminal domain-like"/>
    <property type="match status" value="1"/>
</dbReference>
<dbReference type="PROSITE" id="PS00801">
    <property type="entry name" value="TRANSKETOLASE_1"/>
    <property type="match status" value="1"/>
</dbReference>
<dbReference type="PROSITE" id="PS00802">
    <property type="entry name" value="TRANSKETOLASE_2"/>
    <property type="match status" value="1"/>
</dbReference>
<organism>
    <name type="scientific">Picosynechococcus sp. (strain ATCC 27264 / PCC 7002 / PR-6)</name>
    <name type="common">Agmenellum quadruplicatum</name>
    <dbReference type="NCBI Taxonomy" id="32049"/>
    <lineage>
        <taxon>Bacteria</taxon>
        <taxon>Bacillati</taxon>
        <taxon>Cyanobacteriota</taxon>
        <taxon>Cyanophyceae</taxon>
        <taxon>Oscillatoriophycideae</taxon>
        <taxon>Chroococcales</taxon>
        <taxon>Geminocystaceae</taxon>
        <taxon>Picosynechococcus</taxon>
    </lineage>
</organism>
<feature type="chain" id="PRO_1000115776" description="1-deoxy-D-xylulose-5-phosphate synthase">
    <location>
        <begin position="1"/>
        <end position="638"/>
    </location>
</feature>
<feature type="binding site" evidence="1">
    <location>
        <position position="72"/>
    </location>
    <ligand>
        <name>thiamine diphosphate</name>
        <dbReference type="ChEBI" id="CHEBI:58937"/>
    </ligand>
</feature>
<feature type="binding site" evidence="1">
    <location>
        <begin position="113"/>
        <end position="115"/>
    </location>
    <ligand>
        <name>thiamine diphosphate</name>
        <dbReference type="ChEBI" id="CHEBI:58937"/>
    </ligand>
</feature>
<feature type="binding site" evidence="1">
    <location>
        <position position="144"/>
    </location>
    <ligand>
        <name>Mg(2+)</name>
        <dbReference type="ChEBI" id="CHEBI:18420"/>
    </ligand>
</feature>
<feature type="binding site" evidence="1">
    <location>
        <begin position="145"/>
        <end position="146"/>
    </location>
    <ligand>
        <name>thiamine diphosphate</name>
        <dbReference type="ChEBI" id="CHEBI:58937"/>
    </ligand>
</feature>
<feature type="binding site" evidence="1">
    <location>
        <position position="174"/>
    </location>
    <ligand>
        <name>Mg(2+)</name>
        <dbReference type="ChEBI" id="CHEBI:18420"/>
    </ligand>
</feature>
<feature type="binding site" evidence="1">
    <location>
        <position position="174"/>
    </location>
    <ligand>
        <name>thiamine diphosphate</name>
        <dbReference type="ChEBI" id="CHEBI:58937"/>
    </ligand>
</feature>
<feature type="binding site" evidence="1">
    <location>
        <position position="287"/>
    </location>
    <ligand>
        <name>thiamine diphosphate</name>
        <dbReference type="ChEBI" id="CHEBI:58937"/>
    </ligand>
</feature>
<feature type="binding site" evidence="1">
    <location>
        <position position="370"/>
    </location>
    <ligand>
        <name>thiamine diphosphate</name>
        <dbReference type="ChEBI" id="CHEBI:58937"/>
    </ligand>
</feature>
<gene>
    <name evidence="1" type="primary">dxs</name>
    <name type="ordered locus">SYNPCC7002_A1172</name>
</gene>
<comment type="function">
    <text evidence="1">Catalyzes the acyloin condensation reaction between C atoms 2 and 3 of pyruvate and glyceraldehyde 3-phosphate to yield 1-deoxy-D-xylulose-5-phosphate (DXP).</text>
</comment>
<comment type="catalytic activity">
    <reaction evidence="1">
        <text>D-glyceraldehyde 3-phosphate + pyruvate + H(+) = 1-deoxy-D-xylulose 5-phosphate + CO2</text>
        <dbReference type="Rhea" id="RHEA:12605"/>
        <dbReference type="ChEBI" id="CHEBI:15361"/>
        <dbReference type="ChEBI" id="CHEBI:15378"/>
        <dbReference type="ChEBI" id="CHEBI:16526"/>
        <dbReference type="ChEBI" id="CHEBI:57792"/>
        <dbReference type="ChEBI" id="CHEBI:59776"/>
        <dbReference type="EC" id="2.2.1.7"/>
    </reaction>
</comment>
<comment type="cofactor">
    <cofactor evidence="1">
        <name>Mg(2+)</name>
        <dbReference type="ChEBI" id="CHEBI:18420"/>
    </cofactor>
    <text evidence="1">Binds 1 Mg(2+) ion per subunit.</text>
</comment>
<comment type="cofactor">
    <cofactor evidence="1">
        <name>thiamine diphosphate</name>
        <dbReference type="ChEBI" id="CHEBI:58937"/>
    </cofactor>
    <text evidence="1">Binds 1 thiamine pyrophosphate per subunit.</text>
</comment>
<comment type="pathway">
    <text evidence="1">Metabolic intermediate biosynthesis; 1-deoxy-D-xylulose 5-phosphate biosynthesis; 1-deoxy-D-xylulose 5-phosphate from D-glyceraldehyde 3-phosphate and pyruvate: step 1/1.</text>
</comment>
<comment type="subunit">
    <text evidence="1">Homodimer.</text>
</comment>
<comment type="similarity">
    <text evidence="1">Belongs to the transketolase family. DXPS subfamily.</text>
</comment>
<evidence type="ECO:0000255" key="1">
    <source>
        <dbReference type="HAMAP-Rule" id="MF_00315"/>
    </source>
</evidence>
<protein>
    <recommendedName>
        <fullName evidence="1">1-deoxy-D-xylulose-5-phosphate synthase</fullName>
        <ecNumber evidence="1">2.2.1.7</ecNumber>
    </recommendedName>
    <alternativeName>
        <fullName evidence="1">1-deoxyxylulose-5-phosphate synthase</fullName>
        <shortName evidence="1">DXP synthase</shortName>
        <shortName evidence="1">DXPS</shortName>
    </alternativeName>
</protein>
<name>DXS_PICP2</name>
<sequence length="638" mass="68975">MHLSEITHPNQLHGLTVRQLEEIARQIREKHLQTIAASGGHLGPGLGVVELTLALYQTLDLDRDKVVWDVGHQAYPHKLITGRYNEFHTLRQKDGVAGYLKRSENVFDHFGAGHASTSISAALGMALARDAKGEEFKCVAVIGDGALTGGMALEAINHAGHLPDTNLMVVLNDNEMSISPNVGAISRYLNKVRLSDPVQFLTDNLEEQVKHLPFLGDSLTPEMERLKDSMKRLAVSKVGAVIEELGFKYFGPVDGHNLEELIRTFKQAHKAKGPTLVHVATVKGKGYAIAEKDQVGYHAQKPFDLATGKAFPSKKPTPPSYSKVFAHALTTLAENNPKIVGITAAMATGTGLDKLQQRLPKQYIDVGIAEQHAVTLAAGLACEGMRPVVAIYSTFLQRAYDQIIHDVCIQKLPVFFCLDRAGIVGADGPTHQGMYDIAYLRLIPNIVLMAPKDEAELQRMLVTGIEYTDGAIAMRYPRGSGIGAPLMEDGWEPLPIGKGEILRNGDDILLIGYGAMVHSTLQVAEILSEHGISATVINARFVKPLDSELIAPLAKQIGKVATFEEGCLMGGFGSAVCEALQDHDVLVPVKRFGIGDVLVDHATPAESKAAHGLTPAQMAESIRAAFFQKDAAKTTTTV</sequence>
<reference key="1">
    <citation type="submission" date="2008-02" db="EMBL/GenBank/DDBJ databases">
        <title>Complete sequence of Synechococcus sp. PCC 7002.</title>
        <authorList>
            <person name="Li T."/>
            <person name="Zhao J."/>
            <person name="Zhao C."/>
            <person name="Liu Z."/>
            <person name="Zhao F."/>
            <person name="Marquardt J."/>
            <person name="Nomura C.T."/>
            <person name="Persson S."/>
            <person name="Detter J.C."/>
            <person name="Richardson P.M."/>
            <person name="Lanz C."/>
            <person name="Schuster S.C."/>
            <person name="Wang J."/>
            <person name="Li S."/>
            <person name="Huang X."/>
            <person name="Cai T."/>
            <person name="Yu Z."/>
            <person name="Luo J."/>
            <person name="Zhao J."/>
            <person name="Bryant D.A."/>
        </authorList>
    </citation>
    <scope>NUCLEOTIDE SEQUENCE [LARGE SCALE GENOMIC DNA]</scope>
    <source>
        <strain>ATCC 27264 / PCC 7002 / PR-6</strain>
    </source>
</reference>
<keyword id="KW-0414">Isoprene biosynthesis</keyword>
<keyword id="KW-0460">Magnesium</keyword>
<keyword id="KW-0479">Metal-binding</keyword>
<keyword id="KW-1185">Reference proteome</keyword>
<keyword id="KW-0784">Thiamine biosynthesis</keyword>
<keyword id="KW-0786">Thiamine pyrophosphate</keyword>
<keyword id="KW-0808">Transferase</keyword>
<proteinExistence type="inferred from homology"/>
<accession>B1XKC5</accession>